<reference evidence="15" key="1">
    <citation type="journal article" date="1999" name="Eur. J. Biochem.">
        <title>Pen c 1, a novel enzymic allergen protein from Penicillium citrinum. Purification, characterization, cloning and expression.</title>
        <authorList>
            <person name="Su N.Y."/>
            <person name="Yu C.J."/>
            <person name="Shen H.D."/>
            <person name="Pan F.M."/>
            <person name="Chow L.P."/>
        </authorList>
    </citation>
    <scope>NUCLEOTIDE SEQUENCE [MRNA]</scope>
    <scope>PROTEIN SEQUENCE OF 116-131 AND 296-311</scope>
    <scope>FUNCTION</scope>
    <scope>CATALYTIC ACTIVITY</scope>
    <scope>SUBCELLULAR LOCATION</scope>
    <scope>DEVELOPMENTAL STAGE</scope>
    <scope>ALLERGEN</scope>
    <source>
        <strain evidence="7 15">52-5</strain>
        <tissue evidence="7">Mycelium</tissue>
    </source>
</reference>
<reference key="2">
    <citation type="journal article" date="1999" name="Eur. J. Biochem.">
        <authorList>
            <person name="Su N.Y."/>
            <person name="Yu C.J."/>
            <person name="Shen H.D."/>
            <person name="Pan F.M."/>
            <person name="Chow L.P."/>
        </authorList>
    </citation>
    <scope>ERRATUM OF PUBMED:10103041</scope>
</reference>
<reference key="3">
    <citation type="journal article" date="1993" name="Phytochemistry">
        <title>A heat-labile serine proteinase from Penicillium citrinum.</title>
        <authorList>
            <person name="Yamamoto N."/>
            <person name="Matsumoto K."/>
            <person name="Yamagata Y."/>
            <person name="Hirano K."/>
            <person name="Ichishima E."/>
        </authorList>
    </citation>
    <scope>PROTEIN SEQUENCE OF 116-159 AND 292-311</scope>
    <scope>FUNCTION</scope>
    <scope>CATALYTIC ACTIVITY</scope>
    <scope>ACTIVITY REGULATION</scope>
    <scope>BIOPHYSICOCHEMICAL PROPERTIES</scope>
    <scope>CIRCULAR DICHROISM ANALYSIS</scope>
</reference>
<reference key="4">
    <citation type="journal article" date="1999" name="Biochem. J.">
        <title>Identification and expression of Pen c 2, a novel allergen from Penicillium citrinum.</title>
        <authorList>
            <person name="Chow L.P."/>
            <person name="Su N.Y."/>
            <person name="Yu C.J."/>
            <person name="Chiang B.L."/>
            <person name="Shen H.D."/>
        </authorList>
    </citation>
    <scope>PROTEIN SEQUENCE OF 116-128</scope>
    <source>
        <strain evidence="8">52-5</strain>
    </source>
</reference>
<reference key="5">
    <citation type="journal article" date="1997" name="Clin. Exp. Allergy">
        <title>Characterization of the 33-kilodalton major allergen of Penicillium citrinum by using MoAbs and N-terminal amino acid sequencing.</title>
        <authorList>
            <person name="Shen H.D."/>
            <person name="Lin W.L."/>
            <person name="Liaw S.F."/>
            <person name="Tam M.F."/>
            <person name="Han S.H."/>
        </authorList>
    </citation>
    <scope>PROTEIN SEQUENCE OF 116-124</scope>
    <scope>ALLERGEN</scope>
    <source>
        <strain evidence="9">52-5</strain>
    </source>
</reference>
<proteinExistence type="evidence at protein level"/>
<protein>
    <recommendedName>
        <fullName evidence="10">Subtilisin-like serine protease Pen c 1</fullName>
        <ecNumber evidence="4 5">3.4.21.-</ecNumber>
    </recommendedName>
    <alternativeName>
        <fullName evidence="9">Alkaline serine protease</fullName>
    </alternativeName>
    <allergenName evidence="7">Pen c 1</allergenName>
</protein>
<name>PENC1_PENCI</name>
<comment type="function">
    <text evidence="4 5">Serine protease (PubMed:10103041, PubMed:7763554). Hydrolyzes azocasein (PubMed:10103041). Cleaves peptide bonds of the oxidized insulin B chain preferably at 15-Leu-|-Tyr-16, but also at 4-Gln-|-His-5 and 24-Phe-|-Phe-25, and to a lesser extent at 5-His-|-Leu-6 and 25-Phe-|-Tyr-26. Hydrolyzes amide bonds between amino acids and 7-amino-4-methylcoumarin (AMC) in vitro (PubMed:7763554).</text>
</comment>
<comment type="activity regulation">
    <text evidence="5">Inhibited by 0.1 mM diisopropyl fluorophosphate (DFP), phenylmethanesulfonyl fluoride (PMSF), chymostatin and elastatinal. Not inhibited by N-alpha-p-tosyl-L-lysine chloromethylketone (TLCK), N-tosyl-L-phenylalanyl chloromethyl ketone (TPCK) or N-carbobenzoxy-L-phenylalanine chloromethylketone (ZPCK).</text>
</comment>
<comment type="biophysicochemical properties">
    <kinetics>
        <KM evidence="5">0.14 mM for t-butyloxycarbonyl-Val-Leu-Lys-4-methylcoumaryl-7-amide (Boc-VLK-MCA) (at pH 7.0)</KM>
        <KM evidence="5">0.11 mM for t-butyloxycarbonyl-Leu-Ser-Thr-Arg-4-methylcoumaryl-7-amide (Boc-LSTR-MCA) (at pH 7.0)</KM>
        <KM evidence="5">0.13 mM for succinyl-Leu-Leu-Val-Tyr-4-methylcoumaryl-7-amide (Suc-LLVY-MCA) (at pH 7.0)</KM>
    </kinetics>
    <phDependence>
        <text evidence="5">Active at pH 7 (up to 40 degrees Celsius for 30 minutes) and at pH 11 (up to 25 degrees Celsius).</text>
    </phDependence>
    <temperatureDependence>
        <text evidence="5">Protease activity is retained up to 40 degrees Celsius for 30 minutes, but completely inactivated at 50 degrees Celsius (at pH 7). Activity is retained up to 25 degrees Celsius, and completely inactivated at 40 degrees Celsius (at pH 11).</text>
    </temperatureDependence>
</comment>
<comment type="subcellular location">
    <subcellularLocation>
        <location evidence="2 4">Secreted</location>
    </subcellularLocation>
</comment>
<comment type="developmental stage">
    <text evidence="4">Expression is induced in mycelia after 24 hours of growth. Maximal expression is reached at about 42 hours and expression is slightly decayed after 48 hours.</text>
</comment>
<comment type="allergen">
    <text evidence="4 6">Causes an allergic reaction in human. Binds to IgE.</text>
</comment>
<comment type="similarity">
    <text evidence="2 10">Belongs to the peptidase S8 family.</text>
</comment>
<organism evidence="15">
    <name type="scientific">Penicillium citrinum</name>
    <dbReference type="NCBI Taxonomy" id="5077"/>
    <lineage>
        <taxon>Eukaryota</taxon>
        <taxon>Fungi</taxon>
        <taxon>Dikarya</taxon>
        <taxon>Ascomycota</taxon>
        <taxon>Pezizomycotina</taxon>
        <taxon>Eurotiomycetes</taxon>
        <taxon>Eurotiomycetidae</taxon>
        <taxon>Eurotiales</taxon>
        <taxon>Aspergillaceae</taxon>
        <taxon>Penicillium</taxon>
    </lineage>
</organism>
<sequence>MGFLKVLATSLATLAVVDAGTLLTASNTDAVIPSSYIVVMNDDVSTAEFNTHREWATNVHARLSRRKNGETGPGKHFEINGLKGYTASFDESTAKDIANDPAVKYIEPDMIVNATANVVQSNVPSWGLARISSKRTGTTSYTYDSTAGEGVVFYGVDTGIDISHSDFGGRAKWGTNVVDNDNTDGNGHGTHTASTAAGSKYGVAKKATLVAVKVLGADGSGTNSGVISGMDWAVKDAKSRGANGKYVMNMSLGGEFSKAVNDAAANVVKSGIFLSVAAGNEAENASNSSPASAAEVCTIAASTSTDGSASFTNFGSVVDLYAPGQSITAAYPGGGSKTLSGTSMAAPHVAGVAAYLMALEGVSAGNACARIVQLATSSISRAPSGTTSKLLYNGINV</sequence>
<accession>Q9Y749</accession>
<keyword id="KW-0020">Allergen</keyword>
<keyword id="KW-0903">Direct protein sequencing</keyword>
<keyword id="KW-0378">Hydrolase</keyword>
<keyword id="KW-0645">Protease</keyword>
<keyword id="KW-0964">Secreted</keyword>
<keyword id="KW-0720">Serine protease</keyword>
<keyword id="KW-0732">Signal</keyword>
<keyword id="KW-0865">Zymogen</keyword>
<evidence type="ECO:0000250" key="1">
    <source>
        <dbReference type="UniProtKB" id="Q5JIZ5"/>
    </source>
</evidence>
<evidence type="ECO:0000255" key="2"/>
<evidence type="ECO:0000255" key="3">
    <source>
        <dbReference type="PROSITE-ProRule" id="PRU01240"/>
    </source>
</evidence>
<evidence type="ECO:0000269" key="4">
    <source>
    </source>
</evidence>
<evidence type="ECO:0000269" key="5">
    <source>
    </source>
</evidence>
<evidence type="ECO:0000269" key="6">
    <source>
    </source>
</evidence>
<evidence type="ECO:0000303" key="7">
    <source>
    </source>
</evidence>
<evidence type="ECO:0000303" key="8">
    <source>
    </source>
</evidence>
<evidence type="ECO:0000303" key="9">
    <source>
    </source>
</evidence>
<evidence type="ECO:0000305" key="10"/>
<evidence type="ECO:0000305" key="11">
    <source>
    </source>
</evidence>
<evidence type="ECO:0000305" key="12">
    <source>
    </source>
</evidence>
<evidence type="ECO:0000305" key="13">
    <source>
    </source>
</evidence>
<evidence type="ECO:0000305" key="14">
    <source>
    </source>
</evidence>
<evidence type="ECO:0000312" key="15">
    <source>
        <dbReference type="EMBL" id="AAD25926.1"/>
    </source>
</evidence>
<feature type="signal peptide" evidence="2">
    <location>
        <begin position="1"/>
        <end position="19"/>
    </location>
</feature>
<feature type="propeptide" id="PRO_0000446632" description="Removed in mature form" evidence="2 11 12 13 14">
    <location>
        <begin position="20"/>
        <end position="115"/>
    </location>
</feature>
<feature type="chain" id="PRO_5004337123" description="Subtilisin-like serine protease Pen c 1" evidence="11 12 13 14">
    <location>
        <begin position="116"/>
        <end position="397"/>
    </location>
</feature>
<feature type="domain" description="Inhibitor I9" evidence="2">
    <location>
        <begin position="35"/>
        <end position="113"/>
    </location>
</feature>
<feature type="domain" description="Peptidase S8" evidence="3">
    <location>
        <begin position="125"/>
        <end position="397"/>
    </location>
</feature>
<feature type="active site" description="Charge relay system" evidence="3">
    <location>
        <position position="157"/>
    </location>
</feature>
<feature type="active site" description="Charge relay system" evidence="3">
    <location>
        <position position="188"/>
    </location>
</feature>
<feature type="active site" description="Charge relay system" evidence="3">
    <location>
        <position position="343"/>
    </location>
</feature>
<feature type="site" description="Not glycosylated" evidence="4">
    <location>
        <position position="113"/>
    </location>
</feature>
<feature type="site" description="Not glycosylated" evidence="4">
    <location>
        <position position="249"/>
    </location>
</feature>
<feature type="site" description="Important for catalytic activity" evidence="1">
    <location>
        <position position="280"/>
    </location>
</feature>
<feature type="site" description="Not glycosylated" evidence="4">
    <location>
        <position position="284"/>
    </location>
</feature>
<feature type="sequence conflict" description="In Ref. 3; AA sequence." evidence="10" ref="3">
    <original>T</original>
    <variation>P</variation>
    <location>
        <position position="136"/>
    </location>
</feature>
<feature type="sequence conflict" description="In Ref. 3; AA sequence." evidence="10" ref="3">
    <original>C</original>
    <variation>S</variation>
    <location>
        <position position="297"/>
    </location>
</feature>
<feature type="sequence conflict" description="In Ref. 3; AA sequence." evidence="10" ref="3">
    <original>T</original>
    <variation>I</variation>
    <location>
        <position position="305"/>
    </location>
</feature>
<dbReference type="EC" id="3.4.21.-" evidence="4 5"/>
<dbReference type="EMBL" id="AF084546">
    <property type="protein sequence ID" value="AAD25926.1"/>
    <property type="molecule type" value="mRNA"/>
</dbReference>
<dbReference type="SMR" id="Q9Y749"/>
<dbReference type="Allergome" id="517">
    <property type="allergen name" value="Pen c 1"/>
</dbReference>
<dbReference type="MEROPS" id="S08.025"/>
<dbReference type="BRENDA" id="3.4.21.63">
    <property type="organism ID" value="4608"/>
</dbReference>
<dbReference type="GO" id="GO:0005615">
    <property type="term" value="C:extracellular space"/>
    <property type="evidence" value="ECO:0000314"/>
    <property type="project" value="UniProtKB"/>
</dbReference>
<dbReference type="GO" id="GO:0004252">
    <property type="term" value="F:serine-type endopeptidase activity"/>
    <property type="evidence" value="ECO:0000314"/>
    <property type="project" value="UniProtKB"/>
</dbReference>
<dbReference type="GO" id="GO:0006508">
    <property type="term" value="P:proteolysis"/>
    <property type="evidence" value="ECO:0000314"/>
    <property type="project" value="UniProtKB"/>
</dbReference>
<dbReference type="CDD" id="cd04077">
    <property type="entry name" value="Peptidases_S8_PCSK9_ProteinaseK_like"/>
    <property type="match status" value="1"/>
</dbReference>
<dbReference type="FunFam" id="3.40.50.200:FF:000014">
    <property type="entry name" value="Proteinase K"/>
    <property type="match status" value="1"/>
</dbReference>
<dbReference type="Gene3D" id="3.30.70.80">
    <property type="entry name" value="Peptidase S8 propeptide/proteinase inhibitor I9"/>
    <property type="match status" value="1"/>
</dbReference>
<dbReference type="Gene3D" id="3.40.50.200">
    <property type="entry name" value="Peptidase S8/S53 domain"/>
    <property type="match status" value="1"/>
</dbReference>
<dbReference type="InterPro" id="IPR034193">
    <property type="entry name" value="PCSK9_ProteinaseK-like"/>
</dbReference>
<dbReference type="InterPro" id="IPR000209">
    <property type="entry name" value="Peptidase_S8/S53_dom"/>
</dbReference>
<dbReference type="InterPro" id="IPR036852">
    <property type="entry name" value="Peptidase_S8/S53_dom_sf"/>
</dbReference>
<dbReference type="InterPro" id="IPR023828">
    <property type="entry name" value="Peptidase_S8_Ser-AS"/>
</dbReference>
<dbReference type="InterPro" id="IPR050131">
    <property type="entry name" value="Peptidase_S8_subtilisin-like"/>
</dbReference>
<dbReference type="InterPro" id="IPR015500">
    <property type="entry name" value="Peptidase_S8_subtilisin-rel"/>
</dbReference>
<dbReference type="InterPro" id="IPR010259">
    <property type="entry name" value="S8pro/Inhibitor_I9"/>
</dbReference>
<dbReference type="InterPro" id="IPR037045">
    <property type="entry name" value="S8pro/Inhibitor_I9_sf"/>
</dbReference>
<dbReference type="PANTHER" id="PTHR43806:SF58">
    <property type="entry name" value="ALKALINE PROTEASE 1-RELATED"/>
    <property type="match status" value="1"/>
</dbReference>
<dbReference type="PANTHER" id="PTHR43806">
    <property type="entry name" value="PEPTIDASE S8"/>
    <property type="match status" value="1"/>
</dbReference>
<dbReference type="Pfam" id="PF05922">
    <property type="entry name" value="Inhibitor_I9"/>
    <property type="match status" value="1"/>
</dbReference>
<dbReference type="Pfam" id="PF00082">
    <property type="entry name" value="Peptidase_S8"/>
    <property type="match status" value="1"/>
</dbReference>
<dbReference type="PRINTS" id="PR00723">
    <property type="entry name" value="SUBTILISIN"/>
</dbReference>
<dbReference type="SUPFAM" id="SSF54897">
    <property type="entry name" value="Protease propeptides/inhibitors"/>
    <property type="match status" value="1"/>
</dbReference>
<dbReference type="SUPFAM" id="SSF52743">
    <property type="entry name" value="Subtilisin-like"/>
    <property type="match status" value="1"/>
</dbReference>
<dbReference type="PROSITE" id="PS51892">
    <property type="entry name" value="SUBTILASE"/>
    <property type="match status" value="1"/>
</dbReference>
<dbReference type="PROSITE" id="PS00138">
    <property type="entry name" value="SUBTILASE_SER"/>
    <property type="match status" value="1"/>
</dbReference>